<sequence length="933" mass="100652">MTLLGSEHSLLIRSKFRSVLQLRLQQRRTQEQLANEGIIPPLRSPPAFHEQRRRLESDKAADTLKHKVRNRSDRGNVVKMHILQASSAERPVPAAQMKLKRARLADDLNEKIALRPGPLELVEKNILPVDCAVKEAIKGNQVSLSKSADAFAFEEDSSSDGLSPDQTRSEDLPGSAGSPLDTKAAETPLAGPRGTVQDLTLGSENERNDSAPQSGNQSDLGKQGLGPLGSPLPVHAAVKSKSLSDGKNRHKKPKDPKPKVKKLKYHQYIPPDQKAEKSPPPMDSAYARLLQQQQLFLQLQILSQQQQHRFSYPGIHQAQLKEPNEQMARNPNSSSAPLSSTPLSPAKNSFSGQTGVSSLKPGPLPSNLDDLKVSELRQQLRIRGLPVSGTKTALMDRLRPFQDCSGNPVPNFGDITTVTFPVTPSNALPSYQSSPSTSAFYHFGSTSSSPPISPASSDLSVAGSLPDTFNDASPSFGLHPSPVHACAEESLMSSLNGGSLPPELDGLDSEKDKMLVEKQKVINELTWKLQQEQRQVEELRMQLQKQKRGTCPEKKPLPFLAAPIKQEDAGSSCPFAPLPRAVKRQSNSSEEQPAAGDAARLRPLGNTHCAESSGQTNVLSSTFLSPQCSPQHSPFGAVKSPQHISLPPSPNNPYFLPASSGAPGEEHRVSSPVSSQVCTAQMVGLHSSDKAGPKFSNPSPTFSKSASAVSEITQPPSYEDAVKQQMTRSQQMDELLDVLIESGEMPADAREDHSCLQKVPKIPGSSRSPTAALPKPSATFDQASSGGQLAFDHYSNDSDEHLEVLLNSQSPLGKVSEVALLKIGSEEPAFDGMADGFSGKAAEELFNAHEILPGPLSPMHTQFSPSSVDSSGLPLGFTESPWESMEWLDLTPPSSTQGFSSLSTGGPSIFNIDFLDVTDLNLNSPMDLHLQQW</sequence>
<feature type="chain" id="PRO_0000412529" description="Myocardin">
    <location>
        <begin position="1"/>
        <end position="933"/>
    </location>
</feature>
<feature type="repeat" description="RPEL 1">
    <location>
        <begin position="18"/>
        <end position="43"/>
    </location>
</feature>
<feature type="repeat" description="RPEL 2">
    <location>
        <begin position="62"/>
        <end position="87"/>
    </location>
</feature>
<feature type="repeat" description="RPEL 3">
    <location>
        <begin position="106"/>
        <end position="131"/>
    </location>
</feature>
<feature type="domain" description="SAP" evidence="6">
    <location>
        <begin position="368"/>
        <end position="402"/>
    </location>
</feature>
<feature type="region of interest" description="HDAC5-binding" evidence="1">
    <location>
        <begin position="153"/>
        <end position="205"/>
    </location>
</feature>
<feature type="region of interest" description="Disordered" evidence="7">
    <location>
        <begin position="154"/>
        <end position="282"/>
    </location>
</feature>
<feature type="region of interest" description="Disordered" evidence="7">
    <location>
        <begin position="324"/>
        <end position="365"/>
    </location>
</feature>
<feature type="region of interest" description="Disordered" evidence="7">
    <location>
        <begin position="568"/>
        <end position="613"/>
    </location>
</feature>
<feature type="region of interest" description="Disordered" evidence="7">
    <location>
        <begin position="630"/>
        <end position="672"/>
    </location>
</feature>
<feature type="region of interest" description="Required for interaction with and ubiquitination by STUB1" evidence="4">
    <location>
        <begin position="712"/>
        <end position="933"/>
    </location>
</feature>
<feature type="region of interest" description="Disordered" evidence="7">
    <location>
        <begin position="760"/>
        <end position="794"/>
    </location>
</feature>
<feature type="coiled-coil region" evidence="5">
    <location>
        <begin position="515"/>
        <end position="550"/>
    </location>
</feature>
<feature type="short sequence motif" description="MEF2C-binding" evidence="1">
    <location>
        <begin position="12"/>
        <end position="27"/>
    </location>
</feature>
<feature type="compositionally biased region" description="Polar residues" evidence="7">
    <location>
        <begin position="210"/>
        <end position="220"/>
    </location>
</feature>
<feature type="compositionally biased region" description="Basic residues" evidence="7">
    <location>
        <begin position="248"/>
        <end position="265"/>
    </location>
</feature>
<feature type="compositionally biased region" description="Low complexity" evidence="7">
    <location>
        <begin position="330"/>
        <end position="346"/>
    </location>
</feature>
<feature type="compositionally biased region" description="Polar residues" evidence="7">
    <location>
        <begin position="347"/>
        <end position="357"/>
    </location>
</feature>
<feature type="modified residue" description="Phosphoserine; by GSK3-beta" evidence="4">
    <location>
        <position position="445"/>
    </location>
</feature>
<feature type="modified residue" description="Phosphoserine; by GSK3-beta" evidence="4">
    <location>
        <position position="449"/>
    </location>
</feature>
<feature type="modified residue" description="Phosphoserine; by GSK3-beta" evidence="4">
    <location>
        <position position="453"/>
    </location>
</feature>
<feature type="modified residue" description="Phosphoserine; by GSK3-beta" evidence="4">
    <location>
        <position position="457"/>
    </location>
</feature>
<feature type="modified residue" description="Phosphoserine; by GSK3-beta" evidence="4">
    <location>
        <position position="621"/>
    </location>
</feature>
<feature type="modified residue" description="Phosphoserine; by GSK3-beta" evidence="4">
    <location>
        <position position="625"/>
    </location>
</feature>
<feature type="modified residue" description="Phosphoserine; by GSK3-beta" evidence="4">
    <location>
        <position position="629"/>
    </location>
</feature>
<feature type="modified residue" description="Phosphoserine; by GSK3-beta" evidence="4">
    <location>
        <position position="633"/>
    </location>
</feature>
<feature type="modified residue" description="Phosphoserine; by MAPK1 and MAPK3" evidence="4">
    <location>
        <position position="810"/>
    </location>
</feature>
<feature type="modified residue" description="Phosphoserine; by MAPK1 and MAPK3" evidence="4">
    <location>
        <position position="857"/>
    </location>
</feature>
<feature type="modified residue" description="Phosphoserine; by MAPK1 and MAPK3" evidence="4">
    <location>
        <position position="864"/>
    </location>
</feature>
<feature type="modified residue" description="Phosphothreonine; by MAPK1 and MAPK3" evidence="4">
    <location>
        <position position="891"/>
    </location>
</feature>
<protein>
    <recommendedName>
        <fullName>Myocardin</fullName>
    </recommendedName>
</protein>
<name>MYCD_PIG</name>
<accession>Q7YR76</accession>
<proteinExistence type="evidence at transcript level"/>
<gene>
    <name type="primary">MYOCD</name>
</gene>
<keyword id="KW-0010">Activator</keyword>
<keyword id="KW-0175">Coiled coil</keyword>
<keyword id="KW-0539">Nucleus</keyword>
<keyword id="KW-0597">Phosphoprotein</keyword>
<keyword id="KW-1185">Reference proteome</keyword>
<keyword id="KW-0677">Repeat</keyword>
<keyword id="KW-0804">Transcription</keyword>
<keyword id="KW-0805">Transcription regulation</keyword>
<keyword id="KW-0832">Ubl conjugation</keyword>
<reference key="1">
    <citation type="journal article" date="2003" name="J. Mol. Med.">
        <title>Myocardin mRNA is augmented in the failing myocardium: expression profiling in the porcine model and human dilated cardiomyopathy.</title>
        <authorList>
            <person name="Torrado M."/>
            <person name="Lopez E."/>
            <person name="Centeno A."/>
            <person name="Medrano C."/>
            <person name="Castro-Beiras A."/>
            <person name="Mikhailov A.T."/>
        </authorList>
    </citation>
    <scope>NUCLEOTIDE SEQUENCE [MRNA]</scope>
    <source>
        <strain>Large white</strain>
        <tissue>Heart</tissue>
    </source>
</reference>
<comment type="function">
    <text evidence="1 3">Smooth muscle cells (SM) and cardiac muscle cells-specific transcriptional factor which uses the canonical single or multiple CArG boxes DNA sequence. Acts as a cofactor of serum response factor (SRF) with the potential to modulate SRF-target genes. Plays a crucial role in cardiogenesis, urinary bladder development, and differentiation of the smooth muscle cell lineage (myogenesis) (By similarity). Positively regulates the transcription of genes involved in vascular smooth muscle contraction (By similarity).</text>
</comment>
<comment type="subunit">
    <text evidence="2 3 4">Homodimer. Interacts with MLLT7/FOXO4. Interacts with SRF, its association does not depend on specific DNA sequences for ternary complex formation (By similarity). Interacts (via C-terminal) with EP300 (via the CREB-binding domain) (By similarity). Interacts with HDAC4 and HDAC5 (By similarity). Interacts with MEF2C (By similarity). Interacts (via C-terminus) with STUB1/CHIP (By similarity). Interacts with PURB (By similarity).</text>
</comment>
<comment type="subcellular location">
    <subcellularLocation>
        <location evidence="1">Nucleus</location>
    </subcellularLocation>
</comment>
<comment type="tissue specificity">
    <text>Expressed in the heart and in smooth muscle cells-containing tissues (aorta, pulmonary vein, lung), but is not detectable in skeletal muscle, liver, kidney and spleen.</text>
</comment>
<comment type="domain">
    <text evidence="1">The C-terminal region contains a general transcription activation domain. The N-terminal region, comprising a basic and a Gln-rich domain, confers transcriptional potency and specificity by mediating association with the MADS box of SRF. The basic domain may be required for nuclear localization. The SAP domain is important for transactivation and ternary complex formation (By similarity).</text>
</comment>
<comment type="PTM">
    <text evidence="3">Ubiquitinated; by STUB1/CHIP at the C-terminus, leading to its degradation by the proteasome (By similarity). Phosphorylation by GSK3B is required for STUB1/CHIP-mediated ubiquitination (By similarity).</text>
</comment>
<comment type="PTM">
    <text evidence="3 4">Phosphorylation negatively regulates the intrinsic myocardin transcriptional activity (By similarity). Phosphorylated; by GSK3B (By similarity).</text>
</comment>
<dbReference type="EMBL" id="AY292293">
    <property type="protein sequence ID" value="AAQ19023.1"/>
    <property type="molecule type" value="mRNA"/>
</dbReference>
<dbReference type="RefSeq" id="NP_998910.1">
    <property type="nucleotide sequence ID" value="NM_213745.1"/>
</dbReference>
<dbReference type="SMR" id="Q7YR76"/>
<dbReference type="FunCoup" id="Q7YR76">
    <property type="interactions" value="222"/>
</dbReference>
<dbReference type="STRING" id="9823.ENSSSCP00000067674"/>
<dbReference type="GlyGen" id="Q7YR76">
    <property type="glycosylation" value="1 site"/>
</dbReference>
<dbReference type="Ensembl" id="ENSSSCT00035056954.1">
    <property type="protein sequence ID" value="ENSSSCP00035022907.1"/>
    <property type="gene ID" value="ENSSSCG00035042838.1"/>
</dbReference>
<dbReference type="Ensembl" id="ENSSSCT00055043628.1">
    <property type="protein sequence ID" value="ENSSSCP00055034732.1"/>
    <property type="gene ID" value="ENSSSCG00055021922.1"/>
</dbReference>
<dbReference type="Ensembl" id="ENSSSCT00065042841.1">
    <property type="protein sequence ID" value="ENSSSCP00065018194.1"/>
    <property type="gene ID" value="ENSSSCG00065031624.1"/>
</dbReference>
<dbReference type="Ensembl" id="ENSSSCT00105022095">
    <property type="protein sequence ID" value="ENSSSCP00105016035"/>
    <property type="gene ID" value="ENSSSCG00105010998"/>
</dbReference>
<dbReference type="Ensembl" id="ENSSSCT00110074328">
    <property type="protein sequence ID" value="ENSSSCP00110052490"/>
    <property type="gene ID" value="ENSSSCG00110038907"/>
</dbReference>
<dbReference type="Ensembl" id="ENSSSCT00115018442">
    <property type="protein sequence ID" value="ENSSSCP00115017424"/>
    <property type="gene ID" value="ENSSSCG00115010648"/>
</dbReference>
<dbReference type="GeneID" id="396571"/>
<dbReference type="KEGG" id="ssc:396571"/>
<dbReference type="CTD" id="93649"/>
<dbReference type="InParanoid" id="Q7YR76"/>
<dbReference type="OrthoDB" id="197676at2759"/>
<dbReference type="ChiTaRS" id="MYOCD">
    <property type="organism name" value="pig"/>
</dbReference>
<dbReference type="Proteomes" id="UP000008227">
    <property type="component" value="Unplaced"/>
</dbReference>
<dbReference type="Proteomes" id="UP000314985">
    <property type="component" value="Unplaced"/>
</dbReference>
<dbReference type="Proteomes" id="UP000694570">
    <property type="component" value="Unplaced"/>
</dbReference>
<dbReference type="Proteomes" id="UP000694571">
    <property type="component" value="Unplaced"/>
</dbReference>
<dbReference type="Proteomes" id="UP000694720">
    <property type="component" value="Unplaced"/>
</dbReference>
<dbReference type="Proteomes" id="UP000694722">
    <property type="component" value="Unplaced"/>
</dbReference>
<dbReference type="Proteomes" id="UP000694723">
    <property type="component" value="Unplaced"/>
</dbReference>
<dbReference type="Proteomes" id="UP000694724">
    <property type="component" value="Unplaced"/>
</dbReference>
<dbReference type="Proteomes" id="UP000694725">
    <property type="component" value="Unplaced"/>
</dbReference>
<dbReference type="Proteomes" id="UP000694726">
    <property type="component" value="Unplaced"/>
</dbReference>
<dbReference type="Proteomes" id="UP000694727">
    <property type="component" value="Unplaced"/>
</dbReference>
<dbReference type="Proteomes" id="UP000694728">
    <property type="component" value="Unplaced"/>
</dbReference>
<dbReference type="GO" id="GO:0005634">
    <property type="term" value="C:nucleus"/>
    <property type="evidence" value="ECO:0000250"/>
    <property type="project" value="UniProtKB"/>
</dbReference>
<dbReference type="GO" id="GO:0003713">
    <property type="term" value="F:transcription coactivator activity"/>
    <property type="evidence" value="ECO:0000318"/>
    <property type="project" value="GO_Central"/>
</dbReference>
<dbReference type="GO" id="GO:0055007">
    <property type="term" value="P:cardiac muscle cell differentiation"/>
    <property type="evidence" value="ECO:0000318"/>
    <property type="project" value="GO_Central"/>
</dbReference>
<dbReference type="GO" id="GO:0045944">
    <property type="term" value="P:positive regulation of transcription by RNA polymerase II"/>
    <property type="evidence" value="ECO:0000318"/>
    <property type="project" value="GO_Central"/>
</dbReference>
<dbReference type="GO" id="GO:0051145">
    <property type="term" value="P:smooth muscle cell differentiation"/>
    <property type="evidence" value="ECO:0000318"/>
    <property type="project" value="GO_Central"/>
</dbReference>
<dbReference type="GO" id="GO:0045815">
    <property type="term" value="P:transcription initiation-coupled chromatin remodeling"/>
    <property type="evidence" value="ECO:0000250"/>
    <property type="project" value="UniProtKB"/>
</dbReference>
<dbReference type="FunFam" id="1.10.720.30:FF:000008">
    <property type="entry name" value="Myocardin"/>
    <property type="match status" value="1"/>
</dbReference>
<dbReference type="Gene3D" id="6.10.140.2040">
    <property type="match status" value="1"/>
</dbReference>
<dbReference type="Gene3D" id="6.10.150.10">
    <property type="match status" value="1"/>
</dbReference>
<dbReference type="Gene3D" id="1.10.720.30">
    <property type="entry name" value="SAP domain"/>
    <property type="match status" value="1"/>
</dbReference>
<dbReference type="InterPro" id="IPR043451">
    <property type="entry name" value="Myocardin-like"/>
</dbReference>
<dbReference type="InterPro" id="IPR004018">
    <property type="entry name" value="RPEL_repeat"/>
</dbReference>
<dbReference type="InterPro" id="IPR003034">
    <property type="entry name" value="SAP_dom"/>
</dbReference>
<dbReference type="InterPro" id="IPR036361">
    <property type="entry name" value="SAP_dom_sf"/>
</dbReference>
<dbReference type="PANTHER" id="PTHR22793:SF11">
    <property type="entry name" value="MYOCARDIN"/>
    <property type="match status" value="1"/>
</dbReference>
<dbReference type="PANTHER" id="PTHR22793">
    <property type="entry name" value="MYOCARDIN-RELATED TRANSCRIPTION FACTOR-RELATED"/>
    <property type="match status" value="1"/>
</dbReference>
<dbReference type="Pfam" id="PF02755">
    <property type="entry name" value="RPEL"/>
    <property type="match status" value="1"/>
</dbReference>
<dbReference type="Pfam" id="PF02037">
    <property type="entry name" value="SAP"/>
    <property type="match status" value="1"/>
</dbReference>
<dbReference type="SMART" id="SM00707">
    <property type="entry name" value="RPEL"/>
    <property type="match status" value="3"/>
</dbReference>
<dbReference type="SMART" id="SM00513">
    <property type="entry name" value="SAP"/>
    <property type="match status" value="1"/>
</dbReference>
<dbReference type="SUPFAM" id="SSF68906">
    <property type="entry name" value="SAP domain"/>
    <property type="match status" value="1"/>
</dbReference>
<dbReference type="PROSITE" id="PS51073">
    <property type="entry name" value="RPEL"/>
    <property type="match status" value="3"/>
</dbReference>
<dbReference type="PROSITE" id="PS50800">
    <property type="entry name" value="SAP"/>
    <property type="match status" value="1"/>
</dbReference>
<organism>
    <name type="scientific">Sus scrofa</name>
    <name type="common">Pig</name>
    <dbReference type="NCBI Taxonomy" id="9823"/>
    <lineage>
        <taxon>Eukaryota</taxon>
        <taxon>Metazoa</taxon>
        <taxon>Chordata</taxon>
        <taxon>Craniata</taxon>
        <taxon>Vertebrata</taxon>
        <taxon>Euteleostomi</taxon>
        <taxon>Mammalia</taxon>
        <taxon>Eutheria</taxon>
        <taxon>Laurasiatheria</taxon>
        <taxon>Artiodactyla</taxon>
        <taxon>Suina</taxon>
        <taxon>Suidae</taxon>
        <taxon>Sus</taxon>
    </lineage>
</organism>
<evidence type="ECO:0000250" key="1"/>
<evidence type="ECO:0000250" key="2">
    <source>
        <dbReference type="UniProtKB" id="Q8IZQ8"/>
    </source>
</evidence>
<evidence type="ECO:0000250" key="3">
    <source>
        <dbReference type="UniProtKB" id="Q8R5I7"/>
    </source>
</evidence>
<evidence type="ECO:0000250" key="4">
    <source>
        <dbReference type="UniProtKB" id="Q8VIM5"/>
    </source>
</evidence>
<evidence type="ECO:0000255" key="5"/>
<evidence type="ECO:0000255" key="6">
    <source>
        <dbReference type="PROSITE-ProRule" id="PRU00186"/>
    </source>
</evidence>
<evidence type="ECO:0000256" key="7">
    <source>
        <dbReference type="SAM" id="MobiDB-lite"/>
    </source>
</evidence>